<protein>
    <recommendedName>
        <fullName>Integrin alpha-X</fullName>
    </recommendedName>
    <alternativeName>
        <fullName>CD11 antigen-like family member C</fullName>
    </alternativeName>
    <alternativeName>
        <fullName>Leukocyte adhesion glycoprotein p150,95 alpha chain</fullName>
    </alternativeName>
    <alternativeName>
        <fullName>Leukocyte adhesion receptor p150,95</fullName>
    </alternativeName>
    <cdAntigenName>CD11c</cdAntigenName>
</protein>
<gene>
    <name type="primary">Itgax</name>
</gene>
<feature type="signal peptide" evidence="3">
    <location>
        <begin position="1"/>
        <end position="19"/>
    </location>
</feature>
<feature type="chain" id="PRO_0000016295" description="Integrin alpha-X">
    <location>
        <begin position="20"/>
        <end position="1169"/>
    </location>
</feature>
<feature type="topological domain" description="Extracellular" evidence="3">
    <location>
        <begin position="20"/>
        <end position="1116"/>
    </location>
</feature>
<feature type="transmembrane region" description="Helical" evidence="3">
    <location>
        <begin position="1117"/>
        <end position="1137"/>
    </location>
</feature>
<feature type="topological domain" description="Cytoplasmic" evidence="3">
    <location>
        <begin position="1138"/>
        <end position="1169"/>
    </location>
</feature>
<feature type="repeat" description="FG-GAP 1" evidence="5">
    <location>
        <begin position="23"/>
        <end position="78"/>
    </location>
</feature>
<feature type="repeat" description="FG-GAP 2" evidence="5">
    <location>
        <begin position="79"/>
        <end position="138"/>
    </location>
</feature>
<feature type="domain" description="VWFA" evidence="4">
    <location>
        <begin position="152"/>
        <end position="330"/>
    </location>
</feature>
<feature type="repeat" description="FG-GAP 3" evidence="5">
    <location>
        <begin position="341"/>
        <end position="392"/>
    </location>
</feature>
<feature type="repeat" description="FG-GAP 4" evidence="5">
    <location>
        <begin position="393"/>
        <end position="444"/>
    </location>
</feature>
<feature type="repeat" description="FG-GAP 5" evidence="5">
    <location>
        <begin position="445"/>
        <end position="505"/>
    </location>
</feature>
<feature type="repeat" description="FG-GAP 6" evidence="5">
    <location>
        <begin position="508"/>
        <end position="566"/>
    </location>
</feature>
<feature type="repeat" description="FG-GAP 7" evidence="5">
    <location>
        <begin position="571"/>
        <end position="631"/>
    </location>
</feature>
<feature type="short sequence motif" description="GFFKR motif">
    <location>
        <begin position="1140"/>
        <end position="1144"/>
    </location>
</feature>
<feature type="binding site" evidence="1">
    <location>
        <position position="158"/>
    </location>
    <ligand>
        <name>Mg(2+)</name>
        <dbReference type="ChEBI" id="CHEBI:18420"/>
    </ligand>
</feature>
<feature type="binding site" evidence="1">
    <location>
        <position position="160"/>
    </location>
    <ligand>
        <name>Mg(2+)</name>
        <dbReference type="ChEBI" id="CHEBI:18420"/>
    </ligand>
</feature>
<feature type="binding site" evidence="1">
    <location>
        <position position="162"/>
    </location>
    <ligand>
        <name>Mg(2+)</name>
        <dbReference type="ChEBI" id="CHEBI:18420"/>
    </ligand>
</feature>
<feature type="binding site" evidence="1">
    <location>
        <position position="260"/>
    </location>
    <ligand>
        <name>Mg(2+)</name>
        <dbReference type="ChEBI" id="CHEBI:18420"/>
    </ligand>
</feature>
<feature type="binding site" evidence="2">
    <location>
        <position position="467"/>
    </location>
    <ligand>
        <name>Ca(2+)</name>
        <dbReference type="ChEBI" id="CHEBI:29108"/>
        <label>1</label>
    </ligand>
</feature>
<feature type="binding site" evidence="2">
    <location>
        <position position="469"/>
    </location>
    <ligand>
        <name>Ca(2+)</name>
        <dbReference type="ChEBI" id="CHEBI:29108"/>
        <label>1</label>
    </ligand>
</feature>
<feature type="binding site" evidence="2">
    <location>
        <position position="471"/>
    </location>
    <ligand>
        <name>Ca(2+)</name>
        <dbReference type="ChEBI" id="CHEBI:29108"/>
        <label>1</label>
    </ligand>
</feature>
<feature type="binding site" evidence="2">
    <location>
        <position position="475"/>
    </location>
    <ligand>
        <name>Ca(2+)</name>
        <dbReference type="ChEBI" id="CHEBI:29108"/>
        <label>1</label>
    </ligand>
</feature>
<feature type="binding site" evidence="2">
    <location>
        <position position="531"/>
    </location>
    <ligand>
        <name>Ca(2+)</name>
        <dbReference type="ChEBI" id="CHEBI:29108"/>
        <label>2</label>
    </ligand>
</feature>
<feature type="binding site" evidence="2">
    <location>
        <position position="533"/>
    </location>
    <ligand>
        <name>Ca(2+)</name>
        <dbReference type="ChEBI" id="CHEBI:29108"/>
        <label>2</label>
    </ligand>
</feature>
<feature type="binding site" evidence="2">
    <location>
        <position position="535"/>
    </location>
    <ligand>
        <name>Ca(2+)</name>
        <dbReference type="ChEBI" id="CHEBI:29108"/>
        <label>2</label>
    </ligand>
</feature>
<feature type="binding site" evidence="2">
    <location>
        <position position="539"/>
    </location>
    <ligand>
        <name>Ca(2+)</name>
        <dbReference type="ChEBI" id="CHEBI:29108"/>
        <label>2</label>
    </ligand>
</feature>
<feature type="binding site" evidence="2">
    <location>
        <position position="594"/>
    </location>
    <ligand>
        <name>Ca(2+)</name>
        <dbReference type="ChEBI" id="CHEBI:29108"/>
        <label>3</label>
    </ligand>
</feature>
<feature type="binding site" evidence="2">
    <location>
        <position position="598"/>
    </location>
    <ligand>
        <name>Ca(2+)</name>
        <dbReference type="ChEBI" id="CHEBI:29108"/>
        <label>3</label>
    </ligand>
</feature>
<feature type="binding site" evidence="2">
    <location>
        <position position="602"/>
    </location>
    <ligand>
        <name>Ca(2+)</name>
        <dbReference type="ChEBI" id="CHEBI:29108"/>
        <label>3</label>
    </ligand>
</feature>
<feature type="glycosylation site" description="N-linked (GlcNAc...) asparagine" evidence="3">
    <location>
        <position position="89"/>
    </location>
</feature>
<feature type="glycosylation site" description="N-linked (GlcNAc...) asparagine" evidence="3">
    <location>
        <position position="267"/>
    </location>
</feature>
<feature type="glycosylation site" description="N-linked (GlcNAc...) asparagine" evidence="3">
    <location>
        <position position="393"/>
    </location>
</feature>
<feature type="glycosylation site" description="N-linked (GlcNAc...) asparagine" evidence="3">
    <location>
        <position position="734"/>
    </location>
</feature>
<feature type="glycosylation site" description="N-linked (GlcNAc...) asparagine" evidence="3">
    <location>
        <position position="949"/>
    </location>
</feature>
<feature type="glycosylation site" description="N-linked (GlcNAc...) asparagine" evidence="3">
    <location>
        <position position="1059"/>
    </location>
</feature>
<feature type="glycosylation site" description="N-linked (GlcNAc...) asparagine" evidence="3">
    <location>
        <position position="1084"/>
    </location>
</feature>
<feature type="disulfide bond" evidence="1">
    <location>
        <begin position="69"/>
        <end position="76"/>
    </location>
</feature>
<feature type="disulfide bond" evidence="1">
    <location>
        <begin position="108"/>
        <end position="126"/>
    </location>
</feature>
<feature type="disulfide bond" evidence="1">
    <location>
        <begin position="116"/>
        <end position="146"/>
    </location>
</feature>
<feature type="disulfide bond" evidence="1">
    <location>
        <begin position="496"/>
        <end position="507"/>
    </location>
</feature>
<feature type="disulfide bond" evidence="1">
    <location>
        <begin position="640"/>
        <end position="721"/>
    </location>
</feature>
<feature type="disulfide bond" evidence="1">
    <location>
        <begin position="656"/>
        <end position="711"/>
    </location>
</feature>
<feature type="disulfide bond" evidence="1">
    <location>
        <begin position="770"/>
        <end position="776"/>
    </location>
</feature>
<feature type="disulfide bond" evidence="1">
    <location>
        <begin position="858"/>
        <end position="873"/>
    </location>
</feature>
<feature type="disulfide bond" evidence="1">
    <location>
        <begin position="1007"/>
        <end position="1031"/>
    </location>
</feature>
<feature type="disulfide bond" evidence="1">
    <location>
        <begin position="1036"/>
        <end position="1041"/>
    </location>
</feature>
<evidence type="ECO:0000250" key="1"/>
<evidence type="ECO:0000250" key="2">
    <source>
        <dbReference type="UniProtKB" id="P08648"/>
    </source>
</evidence>
<evidence type="ECO:0000255" key="3"/>
<evidence type="ECO:0000255" key="4">
    <source>
        <dbReference type="PROSITE-ProRule" id="PRU00219"/>
    </source>
</evidence>
<evidence type="ECO:0000255" key="5">
    <source>
        <dbReference type="PROSITE-ProRule" id="PRU00803"/>
    </source>
</evidence>
<evidence type="ECO:0000305" key="6"/>
<dbReference type="EMBL" id="AF211864">
    <property type="protein sequence ID" value="AAF23492.1"/>
    <property type="molecule type" value="mRNA"/>
</dbReference>
<dbReference type="CCDS" id="CCDS40150.1"/>
<dbReference type="RefSeq" id="NP_067309.1">
    <property type="nucleotide sequence ID" value="NM_021334.3"/>
</dbReference>
<dbReference type="SMR" id="Q9QXH4"/>
<dbReference type="BioGRID" id="200825">
    <property type="interactions" value="1"/>
</dbReference>
<dbReference type="ComplexPortal" id="CPX-3134">
    <property type="entry name" value="Integrin alphaX-beta2 complex"/>
</dbReference>
<dbReference type="CORUM" id="Q9QXH4"/>
<dbReference type="FunCoup" id="Q9QXH4">
    <property type="interactions" value="125"/>
</dbReference>
<dbReference type="STRING" id="10090.ENSMUSP00000033053"/>
<dbReference type="GlyCosmos" id="Q9QXH4">
    <property type="glycosylation" value="7 sites, No reported glycans"/>
</dbReference>
<dbReference type="GlyGen" id="Q9QXH4">
    <property type="glycosylation" value="7 sites, 2 N-linked glycans (2 sites)"/>
</dbReference>
<dbReference type="PhosphoSitePlus" id="Q9QXH4"/>
<dbReference type="PaxDb" id="10090-ENSMUSP00000033053"/>
<dbReference type="ProteomicsDB" id="269005"/>
<dbReference type="Antibodypedia" id="1499">
    <property type="antibodies" value="2498 antibodies from 51 providers"/>
</dbReference>
<dbReference type="DNASU" id="16411"/>
<dbReference type="Ensembl" id="ENSMUST00000033053.8">
    <property type="protein sequence ID" value="ENSMUSP00000033053.7"/>
    <property type="gene ID" value="ENSMUSG00000030789.10"/>
</dbReference>
<dbReference type="GeneID" id="16411"/>
<dbReference type="KEGG" id="mmu:16411"/>
<dbReference type="UCSC" id="uc009jyc.1">
    <property type="organism name" value="mouse"/>
</dbReference>
<dbReference type="AGR" id="MGI:96609"/>
<dbReference type="CTD" id="3687"/>
<dbReference type="MGI" id="MGI:96609">
    <property type="gene designation" value="Itgax"/>
</dbReference>
<dbReference type="VEuPathDB" id="HostDB:ENSMUSG00000030789"/>
<dbReference type="eggNOG" id="KOG3637">
    <property type="taxonomic scope" value="Eukaryota"/>
</dbReference>
<dbReference type="GeneTree" id="ENSGT00940000154838"/>
<dbReference type="HOGENOM" id="CLU_004111_3_0_1"/>
<dbReference type="InParanoid" id="Q9QXH4"/>
<dbReference type="OMA" id="EITGDRW"/>
<dbReference type="OrthoDB" id="5317514at2759"/>
<dbReference type="PhylomeDB" id="Q9QXH4"/>
<dbReference type="TreeFam" id="TF105391"/>
<dbReference type="Reactome" id="R-MMU-202733">
    <property type="pathway name" value="Cell surface interactions at the vascular wall"/>
</dbReference>
<dbReference type="Reactome" id="R-MMU-216083">
    <property type="pathway name" value="Integrin cell surface interactions"/>
</dbReference>
<dbReference type="Reactome" id="R-MMU-3000178">
    <property type="pathway name" value="ECM proteoglycans"/>
</dbReference>
<dbReference type="Reactome" id="R-MMU-6798695">
    <property type="pathway name" value="Neutrophil degranulation"/>
</dbReference>
<dbReference type="BioGRID-ORCS" id="16411">
    <property type="hits" value="1 hit in 81 CRISPR screens"/>
</dbReference>
<dbReference type="ChiTaRS" id="Itgax">
    <property type="organism name" value="mouse"/>
</dbReference>
<dbReference type="PRO" id="PR:Q9QXH4"/>
<dbReference type="Proteomes" id="UP000000589">
    <property type="component" value="Chromosome 7"/>
</dbReference>
<dbReference type="RNAct" id="Q9QXH4">
    <property type="molecule type" value="protein"/>
</dbReference>
<dbReference type="Bgee" id="ENSMUSG00000030789">
    <property type="expression patterns" value="Expressed in spleen and 56 other cell types or tissues"/>
</dbReference>
<dbReference type="ExpressionAtlas" id="Q9QXH4">
    <property type="expression patterns" value="baseline and differential"/>
</dbReference>
<dbReference type="GO" id="GO:0009897">
    <property type="term" value="C:external side of plasma membrane"/>
    <property type="evidence" value="ECO:0000314"/>
    <property type="project" value="MGI"/>
</dbReference>
<dbReference type="GO" id="GO:0034689">
    <property type="term" value="C:integrin alphaX-beta2 complex"/>
    <property type="evidence" value="ECO:0000266"/>
    <property type="project" value="ComplexPortal"/>
</dbReference>
<dbReference type="GO" id="GO:0046872">
    <property type="term" value="F:metal ion binding"/>
    <property type="evidence" value="ECO:0007669"/>
    <property type="project" value="UniProtKB-KW"/>
</dbReference>
<dbReference type="GO" id="GO:0030971">
    <property type="term" value="F:receptor tyrosine kinase binding"/>
    <property type="evidence" value="ECO:0007669"/>
    <property type="project" value="Ensembl"/>
</dbReference>
<dbReference type="GO" id="GO:0007160">
    <property type="term" value="P:cell-matrix adhesion"/>
    <property type="evidence" value="ECO:0000303"/>
    <property type="project" value="ComplexPortal"/>
</dbReference>
<dbReference type="GO" id="GO:0051607">
    <property type="term" value="P:defense response to virus"/>
    <property type="evidence" value="ECO:0000314"/>
    <property type="project" value="MGI"/>
</dbReference>
<dbReference type="GO" id="GO:0034113">
    <property type="term" value="P:heterotypic cell-cell adhesion"/>
    <property type="evidence" value="ECO:0007669"/>
    <property type="project" value="Ensembl"/>
</dbReference>
<dbReference type="GO" id="GO:0007229">
    <property type="term" value="P:integrin-mediated signaling pathway"/>
    <property type="evidence" value="ECO:0000303"/>
    <property type="project" value="ComplexPortal"/>
</dbReference>
<dbReference type="GO" id="GO:0045766">
    <property type="term" value="P:positive regulation of angiogenesis"/>
    <property type="evidence" value="ECO:0007669"/>
    <property type="project" value="Ensembl"/>
</dbReference>
<dbReference type="GO" id="GO:0030335">
    <property type="term" value="P:positive regulation of cell migration"/>
    <property type="evidence" value="ECO:0007669"/>
    <property type="project" value="Ensembl"/>
</dbReference>
<dbReference type="GO" id="GO:0008284">
    <property type="term" value="P:positive regulation of cell population proliferation"/>
    <property type="evidence" value="ECO:0007669"/>
    <property type="project" value="Ensembl"/>
</dbReference>
<dbReference type="GO" id="GO:1905956">
    <property type="term" value="P:positive regulation of endothelial tube morphogenesis"/>
    <property type="evidence" value="ECO:0007669"/>
    <property type="project" value="Ensembl"/>
</dbReference>
<dbReference type="GO" id="GO:0010628">
    <property type="term" value="P:positive regulation of gene expression"/>
    <property type="evidence" value="ECO:0000314"/>
    <property type="project" value="ARUK-UCL"/>
</dbReference>
<dbReference type="GO" id="GO:0031643">
    <property type="term" value="P:positive regulation of myelination"/>
    <property type="evidence" value="ECO:0000314"/>
    <property type="project" value="ARUK-UCL"/>
</dbReference>
<dbReference type="CDD" id="cd01469">
    <property type="entry name" value="vWA_integrins_alpha_subunit"/>
    <property type="match status" value="1"/>
</dbReference>
<dbReference type="FunFam" id="2.130.10.130:FF:000005">
    <property type="entry name" value="Integrin alpha L"/>
    <property type="match status" value="1"/>
</dbReference>
<dbReference type="FunFam" id="2.60.40.1510:FF:000009">
    <property type="entry name" value="Integrin alpha M"/>
    <property type="match status" value="1"/>
</dbReference>
<dbReference type="FunFam" id="2.60.40.1530:FF:000003">
    <property type="entry name" value="Integrin alpha M"/>
    <property type="match status" value="1"/>
</dbReference>
<dbReference type="FunFam" id="1.20.5.930:FF:000004">
    <property type="entry name" value="Integrin subunit alpha M"/>
    <property type="match status" value="1"/>
</dbReference>
<dbReference type="FunFam" id="3.40.50.410:FF:000012">
    <property type="entry name" value="Integrin, alpha 10"/>
    <property type="match status" value="1"/>
</dbReference>
<dbReference type="FunFam" id="2.60.40.1460:FF:000001">
    <property type="entry name" value="Integrin, alpha V"/>
    <property type="match status" value="1"/>
</dbReference>
<dbReference type="Gene3D" id="1.20.5.930">
    <property type="entry name" value="Bicelle-embedded integrin alpha(iib) transmembrane segment"/>
    <property type="match status" value="1"/>
</dbReference>
<dbReference type="Gene3D" id="2.130.10.130">
    <property type="entry name" value="Integrin alpha, N-terminal"/>
    <property type="match status" value="1"/>
</dbReference>
<dbReference type="Gene3D" id="2.60.40.1460">
    <property type="entry name" value="Integrin domains. Chain A, domain 2"/>
    <property type="match status" value="1"/>
</dbReference>
<dbReference type="Gene3D" id="2.60.40.1510">
    <property type="entry name" value="ntegrin, alpha v. Chain A, domain 3"/>
    <property type="match status" value="1"/>
</dbReference>
<dbReference type="Gene3D" id="2.60.40.1530">
    <property type="entry name" value="ntegrin, alpha v. Chain A, domain 4"/>
    <property type="match status" value="1"/>
</dbReference>
<dbReference type="Gene3D" id="3.40.50.410">
    <property type="entry name" value="von Willebrand factor, type A domain"/>
    <property type="match status" value="1"/>
</dbReference>
<dbReference type="InterPro" id="IPR013517">
    <property type="entry name" value="FG-GAP"/>
</dbReference>
<dbReference type="InterPro" id="IPR013519">
    <property type="entry name" value="Int_alpha_beta-p"/>
</dbReference>
<dbReference type="InterPro" id="IPR000413">
    <property type="entry name" value="Integrin_alpha"/>
</dbReference>
<dbReference type="InterPro" id="IPR018184">
    <property type="entry name" value="Integrin_alpha_C_CS"/>
</dbReference>
<dbReference type="InterPro" id="IPR013649">
    <property type="entry name" value="Integrin_alpha_Ig-like_1"/>
</dbReference>
<dbReference type="InterPro" id="IPR048285">
    <property type="entry name" value="Integrin_alpha_Ig-like_2"/>
</dbReference>
<dbReference type="InterPro" id="IPR028994">
    <property type="entry name" value="Integrin_alpha_N"/>
</dbReference>
<dbReference type="InterPro" id="IPR032695">
    <property type="entry name" value="Integrin_dom_sf"/>
</dbReference>
<dbReference type="InterPro" id="IPR048633">
    <property type="entry name" value="ITGAX-like_Ig_3"/>
</dbReference>
<dbReference type="InterPro" id="IPR002035">
    <property type="entry name" value="VWF_A"/>
</dbReference>
<dbReference type="InterPro" id="IPR036465">
    <property type="entry name" value="vWFA_dom_sf"/>
</dbReference>
<dbReference type="PANTHER" id="PTHR23220">
    <property type="entry name" value="INTEGRIN ALPHA"/>
    <property type="match status" value="1"/>
</dbReference>
<dbReference type="PANTHER" id="PTHR23220:SF118">
    <property type="entry name" value="INTEGRIN ALPHA-X"/>
    <property type="match status" value="1"/>
</dbReference>
<dbReference type="Pfam" id="PF01839">
    <property type="entry name" value="FG-GAP"/>
    <property type="match status" value="2"/>
</dbReference>
<dbReference type="Pfam" id="PF08441">
    <property type="entry name" value="Integrin_A_Ig_1"/>
    <property type="match status" value="1"/>
</dbReference>
<dbReference type="Pfam" id="PF20805">
    <property type="entry name" value="Integrin_A_Ig_2"/>
    <property type="match status" value="1"/>
</dbReference>
<dbReference type="Pfam" id="PF00357">
    <property type="entry name" value="Integrin_alpha"/>
    <property type="match status" value="1"/>
</dbReference>
<dbReference type="Pfam" id="PF21520">
    <property type="entry name" value="ITGAX-like_Ig_3"/>
    <property type="match status" value="1"/>
</dbReference>
<dbReference type="Pfam" id="PF00092">
    <property type="entry name" value="VWA"/>
    <property type="match status" value="1"/>
</dbReference>
<dbReference type="PRINTS" id="PR01185">
    <property type="entry name" value="INTEGRINA"/>
</dbReference>
<dbReference type="PRINTS" id="PR00453">
    <property type="entry name" value="VWFADOMAIN"/>
</dbReference>
<dbReference type="SMART" id="SM00191">
    <property type="entry name" value="Int_alpha"/>
    <property type="match status" value="5"/>
</dbReference>
<dbReference type="SMART" id="SM00327">
    <property type="entry name" value="VWA"/>
    <property type="match status" value="1"/>
</dbReference>
<dbReference type="SUPFAM" id="SSF69318">
    <property type="entry name" value="Integrin alpha N-terminal domain"/>
    <property type="match status" value="1"/>
</dbReference>
<dbReference type="SUPFAM" id="SSF69179">
    <property type="entry name" value="Integrin domains"/>
    <property type="match status" value="3"/>
</dbReference>
<dbReference type="SUPFAM" id="SSF53300">
    <property type="entry name" value="vWA-like"/>
    <property type="match status" value="1"/>
</dbReference>
<dbReference type="PROSITE" id="PS51470">
    <property type="entry name" value="FG_GAP"/>
    <property type="match status" value="7"/>
</dbReference>
<dbReference type="PROSITE" id="PS00242">
    <property type="entry name" value="INTEGRIN_ALPHA"/>
    <property type="match status" value="1"/>
</dbReference>
<dbReference type="PROSITE" id="PS50234">
    <property type="entry name" value="VWFA"/>
    <property type="match status" value="1"/>
</dbReference>
<organism>
    <name type="scientific">Mus musculus</name>
    <name type="common">Mouse</name>
    <dbReference type="NCBI Taxonomy" id="10090"/>
    <lineage>
        <taxon>Eukaryota</taxon>
        <taxon>Metazoa</taxon>
        <taxon>Chordata</taxon>
        <taxon>Craniata</taxon>
        <taxon>Vertebrata</taxon>
        <taxon>Euteleostomi</taxon>
        <taxon>Mammalia</taxon>
        <taxon>Eutheria</taxon>
        <taxon>Euarchontoglires</taxon>
        <taxon>Glires</taxon>
        <taxon>Rodentia</taxon>
        <taxon>Myomorpha</taxon>
        <taxon>Muroidea</taxon>
        <taxon>Muridae</taxon>
        <taxon>Murinae</taxon>
        <taxon>Mus</taxon>
        <taxon>Mus</taxon>
    </lineage>
</organism>
<keyword id="KW-0106">Calcium</keyword>
<keyword id="KW-0130">Cell adhesion</keyword>
<keyword id="KW-1015">Disulfide bond</keyword>
<keyword id="KW-0325">Glycoprotein</keyword>
<keyword id="KW-0401">Integrin</keyword>
<keyword id="KW-0460">Magnesium</keyword>
<keyword id="KW-0472">Membrane</keyword>
<keyword id="KW-0479">Metal-binding</keyword>
<keyword id="KW-0675">Receptor</keyword>
<keyword id="KW-1185">Reference proteome</keyword>
<keyword id="KW-0677">Repeat</keyword>
<keyword id="KW-0732">Signal</keyword>
<keyword id="KW-0812">Transmembrane</keyword>
<keyword id="KW-1133">Transmembrane helix</keyword>
<accession>Q9QXH4</accession>
<sequence>MSCTWIAFLLLLGFVSCLGFNLDAEKLTHFHMDGAEFGHSVLQYDSSWVVVGAPKEIKATNQIGGLYKCGYHTGNCEPISLQVPPEAVNISLGLSLAAATNPSWLLACGPTVHHTCRENIYLTGLCFLLSSSFKQSQNFPTAQQECPKQDQDIVFLIDGSGSISSTDFEKMLDFVKAVMSQLQRPSTRFSLMQFSDYFRVHFTFNNFISTSSPLSLLGSVRQLRGYTYTASAIKHVITELFTTQSGARQDATKVLIVITDGRKQGDNLSYDSVIPMAEAASIIRYAIGVGKAFYNEHSKQELKAIASMPSHEYVFSVENFDALKDIENQLKEKIFAIEGTETPSSSTFELEMSQEGFSAVFTPDGPVLGAVGSFSWSGGAFLYPSNMRPTFINMSQENEDMRDAYLGYSTALAFWKGVHSLILGAPRHQHTGKVVIFTQESRHWRPKSEVRGTQIGSYFGASLCSVDMDRDGSTDLVLIGVPHYYEHTRGGQVSVCPMPGVGSRWHCGTTLHGEQGHPWGRFGAALTVLGDVNGDSLADVAIGAPGEEENRGAVYIFHGASRQDIAPSPSQRISASQIPSRIQYFGQSLSGGQDLTRDGLVDLAVGSKGRVLLLRTRPILRVSPTVHFTPAEISRSVFECQEQVAPEQTLSDATVCLHIHESPKTQLGDLRSTVTFDLALDHGRLSTRAIFKETKTRALTRVKTLGLNKHCESVKLLLPACVEDSVTPITLRLNFSLVGVPISSLQNLQPMLAVDDQTYFTASLPFEKNCGADHICQDDLSVVFGFPDLKTLVVGSDLELNVDVTVSNDGEDSYGTTVTLFYPVGLSFRRVAEGQVFLRKKEDQQWQRRGQHSLHLMCDSTPDRSQGLWSTSCSSRHVIFRGGSQMTFLVTFDVSPKAELGDRLLLRARVGSENNVPGTPKTTFQLELPVKYAVYTMISSHDQFTKYLNFSTSEKEKTSVVEHRFQVNNLGQRDVPVSINFWVPIELKGEAVWTVMVSHPQNPLTQCYRNRLKPTQFDLLTHMQKSPVLDCSIADCLHLRCDIPSLGILDELYFILKGNLSFGWISQTLQKKVLLLSEAEITFNTSVYSQLPGQEAFLRAQTKTVLEMYKVHNPVPLIVGSSVGGLLLLAIITAILYKAGFFKRQYKEMLEEANGQFVSDGTPTPQVAQ</sequence>
<comment type="function">
    <text evidence="1">Integrin alpha-X/beta-2 is a receptor for fibrinogen. It recognizes the sequence G-P-R in fibrinogen. It mediates cell-cell interaction during inflammatory responses. It is especially important in monocyte adhesion and chemotaxis (By similarity).</text>
</comment>
<comment type="subunit">
    <text evidence="1">Heterodimer of an alpha and a beta subunit. Alpha-X associates with beta-2 (By similarity).</text>
</comment>
<comment type="subcellular location">
    <subcellularLocation>
        <location evidence="1">Membrane</location>
        <topology evidence="1">Single-pass type I membrane protein</topology>
    </subcellularLocation>
</comment>
<comment type="domain">
    <text>The integrin I-domain (insert) is a VWFA domain. Integrins with I-domains do not undergo protease cleavage.</text>
</comment>
<comment type="similarity">
    <text evidence="6">Belongs to the integrin alpha chain family.</text>
</comment>
<name>ITAX_MOUSE</name>
<proteinExistence type="evidence at protein level"/>
<reference key="1">
    <citation type="submission" date="1999-12" db="EMBL/GenBank/DDBJ databases">
        <title>Isolation of genes selectively expressed by dendritic cells.</title>
        <authorList>
            <person name="Huang X."/>
            <person name="Gorski K."/>
            <person name="Tong C."/>
            <person name="Rattis F.-M."/>
            <person name="Tseng S.-Y."/>
            <person name="Pardoll D."/>
            <person name="Tsuchiya H."/>
        </authorList>
    </citation>
    <scope>NUCLEOTIDE SEQUENCE [MRNA]</scope>
    <source>
        <tissue>Dendritic cell</tissue>
    </source>
</reference>
<reference key="2">
    <citation type="journal article" date="2010" name="Cell">
        <title>A tissue-specific atlas of mouse protein phosphorylation and expression.</title>
        <authorList>
            <person name="Huttlin E.L."/>
            <person name="Jedrychowski M.P."/>
            <person name="Elias J.E."/>
            <person name="Goswami T."/>
            <person name="Rad R."/>
            <person name="Beausoleil S.A."/>
            <person name="Villen J."/>
            <person name="Haas W."/>
            <person name="Sowa M.E."/>
            <person name="Gygi S.P."/>
        </authorList>
    </citation>
    <scope>IDENTIFICATION BY MASS SPECTROMETRY [LARGE SCALE ANALYSIS]</scope>
    <source>
        <tissue>Lung</tissue>
        <tissue>Spleen</tissue>
    </source>
</reference>